<proteinExistence type="inferred from homology"/>
<keyword id="KW-0058">Aromatic hydrocarbons catabolism</keyword>
<keyword id="KW-0520">NAD</keyword>
<keyword id="KW-0560">Oxidoreductase</keyword>
<evidence type="ECO:0000255" key="1">
    <source>
        <dbReference type="HAMAP-Rule" id="MF_01647"/>
    </source>
</evidence>
<comment type="function">
    <text evidence="1">Converts 3-phenylpropionate-dihydrodiol (PP-dihydrodiol) and cinnamic acid-dihydrodiol (CI-dihydrodiol) into 3-(2,3-dihydroxylphenyl)propanoic acid (DHPP) and 2,3-dihydroxicinnamic acid (DHCI), respectively.</text>
</comment>
<comment type="catalytic activity">
    <reaction evidence="1">
        <text>3-(cis-5,6-dihydroxycyclohexa-1,3-dien-1-yl)propanoate + NAD(+) = 3-(2,3-dihydroxyphenyl)propanoate + NADH + H(+)</text>
        <dbReference type="Rhea" id="RHEA:25062"/>
        <dbReference type="ChEBI" id="CHEBI:15378"/>
        <dbReference type="ChEBI" id="CHEBI:46951"/>
        <dbReference type="ChEBI" id="CHEBI:57540"/>
        <dbReference type="ChEBI" id="CHEBI:57945"/>
        <dbReference type="ChEBI" id="CHEBI:60087"/>
        <dbReference type="EC" id="1.3.1.87"/>
    </reaction>
</comment>
<comment type="catalytic activity">
    <reaction evidence="1">
        <text>(2E)-3-(cis-5,6-dihydroxycyclohexa-1,3-dien-1-yl)prop-2-enoate + NAD(+) = (2E)-3-(2,3-dihydroxyphenyl)prop-2-enoate + NADH + H(+)</text>
        <dbReference type="Rhea" id="RHEA:25066"/>
        <dbReference type="ChEBI" id="CHEBI:15378"/>
        <dbReference type="ChEBI" id="CHEBI:57540"/>
        <dbReference type="ChEBI" id="CHEBI:57945"/>
        <dbReference type="ChEBI" id="CHEBI:58642"/>
        <dbReference type="ChEBI" id="CHEBI:61451"/>
        <dbReference type="EC" id="1.3.1.87"/>
    </reaction>
</comment>
<comment type="pathway">
    <text evidence="1">Aromatic compound metabolism; 3-phenylpropanoate degradation.</text>
</comment>
<comment type="similarity">
    <text evidence="1">Belongs to the short-chain dehydrogenases/reductases (SDR) family.</text>
</comment>
<reference key="1">
    <citation type="journal article" date="2008" name="DNA Res.">
        <title>Complete genome sequence and comparative analysis of the wild-type commensal Escherichia coli strain SE11 isolated from a healthy adult.</title>
        <authorList>
            <person name="Oshima K."/>
            <person name="Toh H."/>
            <person name="Ogura Y."/>
            <person name="Sasamoto H."/>
            <person name="Morita H."/>
            <person name="Park S.-H."/>
            <person name="Ooka T."/>
            <person name="Iyoda S."/>
            <person name="Taylor T.D."/>
            <person name="Hayashi T."/>
            <person name="Itoh K."/>
            <person name="Hattori M."/>
        </authorList>
    </citation>
    <scope>NUCLEOTIDE SEQUENCE [LARGE SCALE GENOMIC DNA]</scope>
    <source>
        <strain>SE11</strain>
    </source>
</reference>
<organism>
    <name type="scientific">Escherichia coli (strain SE11)</name>
    <dbReference type="NCBI Taxonomy" id="409438"/>
    <lineage>
        <taxon>Bacteria</taxon>
        <taxon>Pseudomonadati</taxon>
        <taxon>Pseudomonadota</taxon>
        <taxon>Gammaproteobacteria</taxon>
        <taxon>Enterobacterales</taxon>
        <taxon>Enterobacteriaceae</taxon>
        <taxon>Escherichia</taxon>
    </lineage>
</organism>
<sequence length="270" mass="28470">MSDLHNESIFITGGGSGLGLALVERFIEEGAQVATLELSAAKVASLRQRFGEHILAVEGNVTCYADYQRAVDQILTRSGKLDCFIGNAGIWDHNASLVNTPAETLETGFHELFNVNVLGYLLGAKACAPALIASEGSMIFTLSNAAWYPGGGGPLYTASKHAATGLIRQLAYELAPKVRVNGVGPCGMASDLRGPQALGQSETSIMQSLTPEKIAAILPLQFFPQPADFTGPYVMLASRRNNRALSGVMINADAGLAIRGIRHVAAGLDL</sequence>
<accession>B6I5B4</accession>
<name>HCAB_ECOSE</name>
<feature type="chain" id="PRO_1000186970" description="3-phenylpropionate-dihydrodiol/cinnamic acid-dihydrodiol dehydrogenase">
    <location>
        <begin position="1"/>
        <end position="270"/>
    </location>
</feature>
<feature type="active site" description="Proton acceptor" evidence="1">
    <location>
        <position position="156"/>
    </location>
</feature>
<feature type="binding site" evidence="1">
    <location>
        <begin position="10"/>
        <end position="34"/>
    </location>
    <ligand>
        <name>NAD(+)</name>
        <dbReference type="ChEBI" id="CHEBI:57540"/>
    </ligand>
</feature>
<feature type="binding site" evidence="1">
    <location>
        <position position="143"/>
    </location>
    <ligand>
        <name>substrate</name>
    </ligand>
</feature>
<dbReference type="EC" id="1.3.1.87" evidence="1"/>
<dbReference type="EMBL" id="AP009240">
    <property type="protein sequence ID" value="BAG78352.1"/>
    <property type="molecule type" value="Genomic_DNA"/>
</dbReference>
<dbReference type="RefSeq" id="WP_001281377.1">
    <property type="nucleotide sequence ID" value="NC_011415.1"/>
</dbReference>
<dbReference type="SMR" id="B6I5B4"/>
<dbReference type="GeneID" id="75206234"/>
<dbReference type="KEGG" id="ecy:ECSE_2828"/>
<dbReference type="HOGENOM" id="CLU_010194_1_0_6"/>
<dbReference type="UniPathway" id="UPA00714"/>
<dbReference type="Proteomes" id="UP000008199">
    <property type="component" value="Chromosome"/>
</dbReference>
<dbReference type="GO" id="GO:0018498">
    <property type="term" value="F:2,3-dihydroxy-2,3-dihydro-phenylpropionate dehydrogenase activity"/>
    <property type="evidence" value="ECO:0007669"/>
    <property type="project" value="UniProtKB-UniRule"/>
</dbReference>
<dbReference type="GO" id="GO:0019380">
    <property type="term" value="P:3-phenylpropionate catabolic process"/>
    <property type="evidence" value="ECO:0007669"/>
    <property type="project" value="UniProtKB-UniRule"/>
</dbReference>
<dbReference type="CDD" id="cd05348">
    <property type="entry name" value="BphB-like_SDR_c"/>
    <property type="match status" value="1"/>
</dbReference>
<dbReference type="FunFam" id="3.40.50.720:FF:000151">
    <property type="entry name" value="3-phenylpropionate-dihydrodiol/cinnamic acid-dihydrodiol dehydrogenase"/>
    <property type="match status" value="1"/>
</dbReference>
<dbReference type="Gene3D" id="3.40.50.720">
    <property type="entry name" value="NAD(P)-binding Rossmann-like Domain"/>
    <property type="match status" value="1"/>
</dbReference>
<dbReference type="HAMAP" id="MF_01647">
    <property type="entry name" value="HcaB"/>
    <property type="match status" value="1"/>
</dbReference>
<dbReference type="InterPro" id="IPR047950">
    <property type="entry name" value="BphB-like_SDR"/>
</dbReference>
<dbReference type="InterPro" id="IPR023643">
    <property type="entry name" value="Dihydrodiol_DH_HcaB"/>
</dbReference>
<dbReference type="InterPro" id="IPR036291">
    <property type="entry name" value="NAD(P)-bd_dom_sf"/>
</dbReference>
<dbReference type="InterPro" id="IPR020904">
    <property type="entry name" value="Sc_DH/Rdtase_CS"/>
</dbReference>
<dbReference type="InterPro" id="IPR002347">
    <property type="entry name" value="SDR_fam"/>
</dbReference>
<dbReference type="NCBIfam" id="NF042950">
    <property type="entry name" value="3PPDhyd_Dh_HcaB"/>
    <property type="match status" value="1"/>
</dbReference>
<dbReference type="NCBIfam" id="NF004849">
    <property type="entry name" value="PRK06200.1"/>
    <property type="match status" value="1"/>
</dbReference>
<dbReference type="PANTHER" id="PTHR43943:SF17">
    <property type="entry name" value="3-PHENYLPROPIONATE-DIHYDRODIOL_CINNAMIC ACID-DIHYDRODIOL DEHYDROGENASE"/>
    <property type="match status" value="1"/>
</dbReference>
<dbReference type="PANTHER" id="PTHR43943">
    <property type="entry name" value="DEHYDROGENASE/REDUCTASE (SDR FAMILY) MEMBER 4"/>
    <property type="match status" value="1"/>
</dbReference>
<dbReference type="Pfam" id="PF00106">
    <property type="entry name" value="adh_short"/>
    <property type="match status" value="1"/>
</dbReference>
<dbReference type="PRINTS" id="PR00081">
    <property type="entry name" value="GDHRDH"/>
</dbReference>
<dbReference type="PRINTS" id="PR00080">
    <property type="entry name" value="SDRFAMILY"/>
</dbReference>
<dbReference type="SUPFAM" id="SSF51735">
    <property type="entry name" value="NAD(P)-binding Rossmann-fold domains"/>
    <property type="match status" value="1"/>
</dbReference>
<dbReference type="PROSITE" id="PS00061">
    <property type="entry name" value="ADH_SHORT"/>
    <property type="match status" value="1"/>
</dbReference>
<gene>
    <name evidence="1" type="primary">hcaB</name>
    <name type="ordered locus">ECSE_2828</name>
</gene>
<protein>
    <recommendedName>
        <fullName evidence="1">3-phenylpropionate-dihydrodiol/cinnamic acid-dihydrodiol dehydrogenase</fullName>
        <ecNumber evidence="1">1.3.1.87</ecNumber>
    </recommendedName>
    <alternativeName>
        <fullName evidence="1">2,3-dihydroxy-2,3-dihydrophenylpropionate dehydrogenase</fullName>
    </alternativeName>
    <alternativeName>
        <fullName evidence="1">3-(cis-5,6-dihydroxycyclohexa-1,3-dien-1-yl)propanoate dehydrogenase</fullName>
    </alternativeName>
    <alternativeName>
        <fullName evidence="1">CI-dihydrodiol dehydrogenase</fullName>
    </alternativeName>
    <alternativeName>
        <fullName evidence="1">Cis-3-(2-carboxyethenyl)-3,5-cyclohexadiene-1,2-diol dehydrogenase</fullName>
    </alternativeName>
    <alternativeName>
        <fullName evidence="1">Cis-3-(2-carboxyethyl)-3,5-cyclohexadiene-1,2-diol dehydrogenase</fullName>
    </alternativeName>
    <alternativeName>
        <fullName evidence="1">PP-dihydrodiol dehydrogenase</fullName>
    </alternativeName>
</protein>